<keyword id="KW-0066">ATP synthesis</keyword>
<keyword id="KW-1003">Cell membrane</keyword>
<keyword id="KW-0139">CF(1)</keyword>
<keyword id="KW-0375">Hydrogen ion transport</keyword>
<keyword id="KW-0406">Ion transport</keyword>
<keyword id="KW-0472">Membrane</keyword>
<keyword id="KW-0813">Transport</keyword>
<gene>
    <name evidence="1" type="primary">atpG</name>
</gene>
<protein>
    <recommendedName>
        <fullName evidence="1">ATP synthase gamma chain</fullName>
    </recommendedName>
    <alternativeName>
        <fullName evidence="1">ATP synthase F1 sector gamma subunit</fullName>
    </alternativeName>
    <alternativeName>
        <fullName evidence="1">F-ATPase gamma subunit</fullName>
    </alternativeName>
</protein>
<organism>
    <name type="scientific">Clostridium pasteurianum</name>
    <dbReference type="NCBI Taxonomy" id="1501"/>
    <lineage>
        <taxon>Bacteria</taxon>
        <taxon>Bacillati</taxon>
        <taxon>Bacillota</taxon>
        <taxon>Clostridia</taxon>
        <taxon>Eubacteriales</taxon>
        <taxon>Clostridiaceae</taxon>
        <taxon>Clostridium</taxon>
    </lineage>
</organism>
<comment type="function">
    <text evidence="1">Produces ATP from ADP in the presence of a proton gradient across the membrane. The gamma chain is believed to be important in regulating ATPase activity and the flow of protons through the CF(0) complex.</text>
</comment>
<comment type="subunit">
    <text evidence="1">F-type ATPases have 2 components, CF(1) - the catalytic core - and CF(0) - the membrane proton channel. CF(1) has five subunits: alpha(3), beta(3), gamma(1), delta(1), epsilon(1). CF(0) has three main subunits: a, b and c.</text>
</comment>
<comment type="subcellular location">
    <subcellularLocation>
        <location evidence="1">Cell membrane</location>
        <topology evidence="1">Peripheral membrane protein</topology>
    </subcellularLocation>
</comment>
<comment type="similarity">
    <text evidence="1">Belongs to the ATPase gamma chain family.</text>
</comment>
<sequence length="281" mass="31301">MAAGLITIKRRIQSITNTRKITKAMGLIATSTLRKARRNLDANLSYYSSFEDVMKKVSSGILGENIYTNGNGSKEKLYITMTSDAGLCGGFNGNVVNAAVSEISKDRENSLIMSVGQKGRGYFKRLQYDTIAEYVDIQNEPTLTEAKTISEHALSLYNKGEIGEINIVYSKFISTIKQDIIIKRVLPFDMKDIKYDGSIEFEPEINELIEGIVAVYLKSQLFNFLLNSKASEQASKMTAMDSATKNANELLDDLNLRYNRIRQSAITQEITEIVSGAEAQK</sequence>
<evidence type="ECO:0000255" key="1">
    <source>
        <dbReference type="HAMAP-Rule" id="MF_00815"/>
    </source>
</evidence>
<feature type="chain" id="PRO_0000073266" description="ATP synthase gamma chain">
    <location>
        <begin position="1"/>
        <end position="281"/>
    </location>
</feature>
<reference key="1">
    <citation type="journal article" date="2003" name="J. Bacteriol.">
        <title>Clostridium pasteurianum F1F0 ATP synthase: operon, composition, and some properties.</title>
        <authorList>
            <person name="Das A."/>
            <person name="Ljungdahl L.G."/>
        </authorList>
    </citation>
    <scope>NUCLEOTIDE SEQUENCE [GENOMIC DNA]</scope>
</reference>
<name>ATPG_CLOPA</name>
<proteinExistence type="inferred from homology"/>
<accession>Q93Q45</accession>
<dbReference type="EMBL" id="AF283808">
    <property type="protein sequence ID" value="AAK72442.1"/>
    <property type="molecule type" value="Genomic_DNA"/>
</dbReference>
<dbReference type="SMR" id="Q93Q45"/>
<dbReference type="GO" id="GO:0005886">
    <property type="term" value="C:plasma membrane"/>
    <property type="evidence" value="ECO:0007669"/>
    <property type="project" value="UniProtKB-SubCell"/>
</dbReference>
<dbReference type="GO" id="GO:0045259">
    <property type="term" value="C:proton-transporting ATP synthase complex"/>
    <property type="evidence" value="ECO:0007669"/>
    <property type="project" value="UniProtKB-KW"/>
</dbReference>
<dbReference type="GO" id="GO:0005524">
    <property type="term" value="F:ATP binding"/>
    <property type="evidence" value="ECO:0007669"/>
    <property type="project" value="UniProtKB-UniRule"/>
</dbReference>
<dbReference type="GO" id="GO:0046933">
    <property type="term" value="F:proton-transporting ATP synthase activity, rotational mechanism"/>
    <property type="evidence" value="ECO:0007669"/>
    <property type="project" value="UniProtKB-UniRule"/>
</dbReference>
<dbReference type="GO" id="GO:0042777">
    <property type="term" value="P:proton motive force-driven plasma membrane ATP synthesis"/>
    <property type="evidence" value="ECO:0007669"/>
    <property type="project" value="UniProtKB-UniRule"/>
</dbReference>
<dbReference type="CDD" id="cd12151">
    <property type="entry name" value="F1-ATPase_gamma"/>
    <property type="match status" value="1"/>
</dbReference>
<dbReference type="Gene3D" id="3.40.1380.10">
    <property type="match status" value="1"/>
</dbReference>
<dbReference type="Gene3D" id="1.10.287.80">
    <property type="entry name" value="ATP synthase, gamma subunit, helix hairpin domain"/>
    <property type="match status" value="1"/>
</dbReference>
<dbReference type="HAMAP" id="MF_00815">
    <property type="entry name" value="ATP_synth_gamma_bact"/>
    <property type="match status" value="1"/>
</dbReference>
<dbReference type="InterPro" id="IPR035968">
    <property type="entry name" value="ATP_synth_F1_ATPase_gsu"/>
</dbReference>
<dbReference type="InterPro" id="IPR000131">
    <property type="entry name" value="ATP_synth_F1_gsu"/>
</dbReference>
<dbReference type="InterPro" id="IPR023632">
    <property type="entry name" value="ATP_synth_F1_gsu_CS"/>
</dbReference>
<dbReference type="NCBIfam" id="TIGR01146">
    <property type="entry name" value="ATPsyn_F1gamma"/>
    <property type="match status" value="1"/>
</dbReference>
<dbReference type="PANTHER" id="PTHR11693">
    <property type="entry name" value="ATP SYNTHASE GAMMA CHAIN"/>
    <property type="match status" value="1"/>
</dbReference>
<dbReference type="PANTHER" id="PTHR11693:SF22">
    <property type="entry name" value="ATP SYNTHASE SUBUNIT GAMMA, MITOCHONDRIAL"/>
    <property type="match status" value="1"/>
</dbReference>
<dbReference type="Pfam" id="PF00231">
    <property type="entry name" value="ATP-synt"/>
    <property type="match status" value="1"/>
</dbReference>
<dbReference type="PRINTS" id="PR00126">
    <property type="entry name" value="ATPASEGAMMA"/>
</dbReference>
<dbReference type="SUPFAM" id="SSF52943">
    <property type="entry name" value="ATP synthase (F1-ATPase), gamma subunit"/>
    <property type="match status" value="1"/>
</dbReference>
<dbReference type="PROSITE" id="PS00153">
    <property type="entry name" value="ATPASE_GAMMA"/>
    <property type="match status" value="1"/>
</dbReference>